<keyword id="KW-0002">3D-structure</keyword>
<keyword id="KW-0963">Cytoplasm</keyword>
<keyword id="KW-0378">Hydrolase</keyword>
<keyword id="KW-0645">Protease</keyword>
<keyword id="KW-1185">Reference proteome</keyword>
<keyword id="KW-0720">Serine protease</keyword>
<reference key="1">
    <citation type="journal article" date="2000" name="Mol. Microbiol.">
        <title>The ClpP serine protease is essential for the intracellular parasitism and virulence of Listeria monocytogenes.</title>
        <authorList>
            <person name="Gaillot O."/>
            <person name="Pellegrini E."/>
            <person name="Bregenholt S."/>
            <person name="Nair S."/>
            <person name="Berche P."/>
        </authorList>
    </citation>
    <scope>NUCLEOTIDE SEQUENCE [GENOMIC DNA]</scope>
    <source>
        <strain>LO28 / Serovar 1/2c</strain>
    </source>
</reference>
<reference key="2">
    <citation type="journal article" date="2001" name="Science">
        <title>Comparative genomics of Listeria species.</title>
        <authorList>
            <person name="Glaser P."/>
            <person name="Frangeul L."/>
            <person name="Buchrieser C."/>
            <person name="Rusniok C."/>
            <person name="Amend A."/>
            <person name="Baquero F."/>
            <person name="Berche P."/>
            <person name="Bloecker H."/>
            <person name="Brandt P."/>
            <person name="Chakraborty T."/>
            <person name="Charbit A."/>
            <person name="Chetouani F."/>
            <person name="Couve E."/>
            <person name="de Daruvar A."/>
            <person name="Dehoux P."/>
            <person name="Domann E."/>
            <person name="Dominguez-Bernal G."/>
            <person name="Duchaud E."/>
            <person name="Durant L."/>
            <person name="Dussurget O."/>
            <person name="Entian K.-D."/>
            <person name="Fsihi H."/>
            <person name="Garcia-del Portillo F."/>
            <person name="Garrido P."/>
            <person name="Gautier L."/>
            <person name="Goebel W."/>
            <person name="Gomez-Lopez N."/>
            <person name="Hain T."/>
            <person name="Hauf J."/>
            <person name="Jackson D."/>
            <person name="Jones L.-M."/>
            <person name="Kaerst U."/>
            <person name="Kreft J."/>
            <person name="Kuhn M."/>
            <person name="Kunst F."/>
            <person name="Kurapkat G."/>
            <person name="Madueno E."/>
            <person name="Maitournam A."/>
            <person name="Mata Vicente J."/>
            <person name="Ng E."/>
            <person name="Nedjari H."/>
            <person name="Nordsiek G."/>
            <person name="Novella S."/>
            <person name="de Pablos B."/>
            <person name="Perez-Diaz J.-C."/>
            <person name="Purcell R."/>
            <person name="Remmel B."/>
            <person name="Rose M."/>
            <person name="Schlueter T."/>
            <person name="Simoes N."/>
            <person name="Tierrez A."/>
            <person name="Vazquez-Boland J.-A."/>
            <person name="Voss H."/>
            <person name="Wehland J."/>
            <person name="Cossart P."/>
        </authorList>
    </citation>
    <scope>NUCLEOTIDE SEQUENCE [LARGE SCALE GENOMIC DNA]</scope>
    <source>
        <strain>ATCC BAA-679 / EGD-e</strain>
    </source>
</reference>
<feature type="chain" id="PRO_0000179586" description="ATP-dependent Clp protease proteolytic subunit">
    <location>
        <begin position="1"/>
        <end position="198"/>
    </location>
</feature>
<feature type="active site" description="Nucleophile" evidence="1">
    <location>
        <position position="98"/>
    </location>
</feature>
<feature type="active site" evidence="1">
    <location>
        <position position="123"/>
    </location>
</feature>
<feature type="helix" evidence="2">
    <location>
        <begin position="20"/>
        <end position="25"/>
    </location>
</feature>
<feature type="turn" evidence="2">
    <location>
        <begin position="26"/>
        <end position="28"/>
    </location>
</feature>
<feature type="strand" evidence="2">
    <location>
        <begin position="29"/>
        <end position="32"/>
    </location>
</feature>
<feature type="helix" evidence="2">
    <location>
        <begin position="38"/>
        <end position="54"/>
    </location>
</feature>
<feature type="strand" evidence="2">
    <location>
        <begin position="56"/>
        <end position="58"/>
    </location>
</feature>
<feature type="strand" evidence="2">
    <location>
        <begin position="60"/>
        <end position="66"/>
    </location>
</feature>
<feature type="helix" evidence="2">
    <location>
        <begin position="71"/>
        <end position="83"/>
    </location>
</feature>
<feature type="strand" evidence="2">
    <location>
        <begin position="84"/>
        <end position="86"/>
    </location>
</feature>
<feature type="strand" evidence="2">
    <location>
        <begin position="88"/>
        <end position="97"/>
    </location>
</feature>
<feature type="helix" evidence="2">
    <location>
        <begin position="99"/>
        <end position="105"/>
    </location>
</feature>
<feature type="strand" evidence="2">
    <location>
        <begin position="112"/>
        <end position="114"/>
    </location>
</feature>
<feature type="strand" evidence="2">
    <location>
        <begin position="119"/>
        <end position="121"/>
    </location>
</feature>
<feature type="turn" evidence="2">
    <location>
        <begin position="127"/>
        <end position="132"/>
    </location>
</feature>
<feature type="helix" evidence="2">
    <location>
        <begin position="136"/>
        <end position="158"/>
    </location>
</feature>
<feature type="helix" evidence="2">
    <location>
        <begin position="162"/>
        <end position="168"/>
    </location>
</feature>
<feature type="strand" evidence="3">
    <location>
        <begin position="173"/>
        <end position="175"/>
    </location>
</feature>
<feature type="helix" evidence="2">
    <location>
        <begin position="177"/>
        <end position="182"/>
    </location>
</feature>
<feature type="strand" evidence="2">
    <location>
        <begin position="187"/>
        <end position="189"/>
    </location>
</feature>
<comment type="function">
    <text evidence="1">Cleaves peptides in various proteins in a process that requires ATP hydrolysis. Has a chymotrypsin-like activity. Plays a major role in the degradation of misfolded proteins.</text>
</comment>
<comment type="catalytic activity">
    <reaction evidence="1">
        <text>Hydrolysis of proteins to small peptides in the presence of ATP and magnesium. alpha-casein is the usual test substrate. In the absence of ATP, only oligopeptides shorter than five residues are hydrolyzed (such as succinyl-Leu-Tyr-|-NHMec, and Leu-Tyr-Leu-|-Tyr-Trp, in which cleavage of the -Tyr-|-Leu- and -Tyr-|-Trp bonds also occurs).</text>
        <dbReference type="EC" id="3.4.21.92"/>
    </reaction>
</comment>
<comment type="subunit">
    <text evidence="1">Fourteen ClpP subunits assemble into 2 heptameric rings which stack back to back to give a disk-like structure with a central cavity, resembling the structure of eukaryotic proteasomes.</text>
</comment>
<comment type="subcellular location">
    <subcellularLocation>
        <location evidence="1">Cytoplasm</location>
    </subcellularLocation>
</comment>
<comment type="similarity">
    <text evidence="1">Belongs to the peptidase S14 family.</text>
</comment>
<name>CLPP_LISMO</name>
<evidence type="ECO:0000255" key="1">
    <source>
        <dbReference type="HAMAP-Rule" id="MF_00444"/>
    </source>
</evidence>
<evidence type="ECO:0007829" key="2">
    <source>
        <dbReference type="PDB" id="4JCT"/>
    </source>
</evidence>
<evidence type="ECO:0007829" key="3">
    <source>
        <dbReference type="PDB" id="4RYF"/>
    </source>
</evidence>
<dbReference type="EC" id="3.4.21.92" evidence="1"/>
<dbReference type="EMBL" id="AF102775">
    <property type="protein sequence ID" value="AAF04744.1"/>
    <property type="molecule type" value="Genomic_DNA"/>
</dbReference>
<dbReference type="EMBL" id="AL591983">
    <property type="protein sequence ID" value="CAD00546.1"/>
    <property type="molecule type" value="Genomic_DNA"/>
</dbReference>
<dbReference type="PIR" id="AD1383">
    <property type="entry name" value="AD1383"/>
</dbReference>
<dbReference type="RefSeq" id="NP_465991.1">
    <property type="nucleotide sequence ID" value="NC_003210.1"/>
</dbReference>
<dbReference type="RefSeq" id="WP_003722600.1">
    <property type="nucleotide sequence ID" value="NZ_CP149495.1"/>
</dbReference>
<dbReference type="PDB" id="4JCT">
    <property type="method" value="X-ray"/>
    <property type="resolution" value="2.60 A"/>
    <property type="chains" value="A/B/C/D/E/F/G=1-198"/>
</dbReference>
<dbReference type="PDB" id="4RYF">
    <property type="method" value="X-ray"/>
    <property type="resolution" value="2.80 A"/>
    <property type="chains" value="H/I/J/K/L/M/N=1-198"/>
</dbReference>
<dbReference type="PDB" id="6SFX">
    <property type="method" value="EM"/>
    <property type="resolution" value="4.00 A"/>
    <property type="chains" value="H/I/J/K/L/M/N=1-198"/>
</dbReference>
<dbReference type="PDBsum" id="4JCT"/>
<dbReference type="PDBsum" id="4RYF"/>
<dbReference type="PDBsum" id="6SFX"/>
<dbReference type="SMR" id="Q9RQI6"/>
<dbReference type="STRING" id="169963.gene:17595179"/>
<dbReference type="MEROPS" id="S14.001"/>
<dbReference type="PaxDb" id="169963-lmo2468"/>
<dbReference type="EnsemblBacteria" id="CAD00546">
    <property type="protein sequence ID" value="CAD00546"/>
    <property type="gene ID" value="CAD00546"/>
</dbReference>
<dbReference type="GeneID" id="987364"/>
<dbReference type="KEGG" id="lmo:lmo2468"/>
<dbReference type="PATRIC" id="fig|169963.11.peg.2527"/>
<dbReference type="eggNOG" id="COG0740">
    <property type="taxonomic scope" value="Bacteria"/>
</dbReference>
<dbReference type="HOGENOM" id="CLU_058707_3_2_9"/>
<dbReference type="OrthoDB" id="9802800at2"/>
<dbReference type="PhylomeDB" id="Q9RQI6"/>
<dbReference type="BioCyc" id="LMON169963:LMO2468-MONOMER"/>
<dbReference type="EvolutionaryTrace" id="Q9RQI6"/>
<dbReference type="Proteomes" id="UP000000817">
    <property type="component" value="Chromosome"/>
</dbReference>
<dbReference type="GO" id="GO:0005737">
    <property type="term" value="C:cytoplasm"/>
    <property type="evidence" value="ECO:0007669"/>
    <property type="project" value="UniProtKB-SubCell"/>
</dbReference>
<dbReference type="GO" id="GO:0009368">
    <property type="term" value="C:endopeptidase Clp complex"/>
    <property type="evidence" value="ECO:0000318"/>
    <property type="project" value="GO_Central"/>
</dbReference>
<dbReference type="GO" id="GO:0004176">
    <property type="term" value="F:ATP-dependent peptidase activity"/>
    <property type="evidence" value="ECO:0000318"/>
    <property type="project" value="GO_Central"/>
</dbReference>
<dbReference type="GO" id="GO:0051117">
    <property type="term" value="F:ATPase binding"/>
    <property type="evidence" value="ECO:0000318"/>
    <property type="project" value="GO_Central"/>
</dbReference>
<dbReference type="GO" id="GO:0004252">
    <property type="term" value="F:serine-type endopeptidase activity"/>
    <property type="evidence" value="ECO:0000318"/>
    <property type="project" value="GO_Central"/>
</dbReference>
<dbReference type="GO" id="GO:0006515">
    <property type="term" value="P:protein quality control for misfolded or incompletely synthesized proteins"/>
    <property type="evidence" value="ECO:0000318"/>
    <property type="project" value="GO_Central"/>
</dbReference>
<dbReference type="CDD" id="cd07017">
    <property type="entry name" value="S14_ClpP_2"/>
    <property type="match status" value="1"/>
</dbReference>
<dbReference type="FunFam" id="3.90.226.10:FF:000001">
    <property type="entry name" value="ATP-dependent Clp protease proteolytic subunit"/>
    <property type="match status" value="1"/>
</dbReference>
<dbReference type="Gene3D" id="3.90.226.10">
    <property type="entry name" value="2-enoyl-CoA Hydratase, Chain A, domain 1"/>
    <property type="match status" value="1"/>
</dbReference>
<dbReference type="HAMAP" id="MF_00444">
    <property type="entry name" value="ClpP"/>
    <property type="match status" value="1"/>
</dbReference>
<dbReference type="InterPro" id="IPR001907">
    <property type="entry name" value="ClpP"/>
</dbReference>
<dbReference type="InterPro" id="IPR029045">
    <property type="entry name" value="ClpP/crotonase-like_dom_sf"/>
</dbReference>
<dbReference type="InterPro" id="IPR023562">
    <property type="entry name" value="ClpP/TepA"/>
</dbReference>
<dbReference type="InterPro" id="IPR033135">
    <property type="entry name" value="ClpP_His_AS"/>
</dbReference>
<dbReference type="InterPro" id="IPR018215">
    <property type="entry name" value="ClpP_Ser_AS"/>
</dbReference>
<dbReference type="NCBIfam" id="TIGR00493">
    <property type="entry name" value="clpP"/>
    <property type="match status" value="1"/>
</dbReference>
<dbReference type="NCBIfam" id="NF001368">
    <property type="entry name" value="PRK00277.1"/>
    <property type="match status" value="1"/>
</dbReference>
<dbReference type="NCBIfam" id="NF009205">
    <property type="entry name" value="PRK12553.1"/>
    <property type="match status" value="1"/>
</dbReference>
<dbReference type="PANTHER" id="PTHR10381">
    <property type="entry name" value="ATP-DEPENDENT CLP PROTEASE PROTEOLYTIC SUBUNIT"/>
    <property type="match status" value="1"/>
</dbReference>
<dbReference type="PANTHER" id="PTHR10381:SF70">
    <property type="entry name" value="ATP-DEPENDENT CLP PROTEASE PROTEOLYTIC SUBUNIT"/>
    <property type="match status" value="1"/>
</dbReference>
<dbReference type="Pfam" id="PF00574">
    <property type="entry name" value="CLP_protease"/>
    <property type="match status" value="1"/>
</dbReference>
<dbReference type="PRINTS" id="PR00127">
    <property type="entry name" value="CLPPROTEASEP"/>
</dbReference>
<dbReference type="SUPFAM" id="SSF52096">
    <property type="entry name" value="ClpP/crotonase"/>
    <property type="match status" value="1"/>
</dbReference>
<dbReference type="PROSITE" id="PS00382">
    <property type="entry name" value="CLP_PROTEASE_HIS"/>
    <property type="match status" value="1"/>
</dbReference>
<dbReference type="PROSITE" id="PS00381">
    <property type="entry name" value="CLP_PROTEASE_SER"/>
    <property type="match status" value="1"/>
</dbReference>
<protein>
    <recommendedName>
        <fullName evidence="1">ATP-dependent Clp protease proteolytic subunit</fullName>
        <ecNumber evidence="1">3.4.21.92</ecNumber>
    </recommendedName>
    <alternativeName>
        <fullName evidence="1">Endopeptidase Clp</fullName>
    </alternativeName>
</protein>
<accession>Q9RQI6</accession>
<gene>
    <name evidence="1" type="primary">clpP</name>
    <name type="ordered locus">lmo2468</name>
</gene>
<sequence length="198" mass="21619">MNLIPTVIEQTSRGERAYDIYSRLLKDRIIMLGSAIDDNVANSIVSQLLFLDAQDPEKDIFLYINSPGGSISAGMAIYDTMNFVKADVQTIGMGMAASMGSFLLTAGANGKRFALPNAEIMIHQPLGGAQGQATEIEIAARHILKIKERMNTIMAEKTGQPYEVIARDTDRDNFMTAQEAKDYGLIDDIIINKSGLKG</sequence>
<proteinExistence type="evidence at protein level"/>
<organism>
    <name type="scientific">Listeria monocytogenes serovar 1/2a (strain ATCC BAA-679 / EGD-e)</name>
    <dbReference type="NCBI Taxonomy" id="169963"/>
    <lineage>
        <taxon>Bacteria</taxon>
        <taxon>Bacillati</taxon>
        <taxon>Bacillota</taxon>
        <taxon>Bacilli</taxon>
        <taxon>Bacillales</taxon>
        <taxon>Listeriaceae</taxon>
        <taxon>Listeria</taxon>
    </lineage>
</organism>